<accession>Q8CIK8</accession>
<accession>Q3UV90</accession>
<accession>Q6PJA8</accession>
<accession>Q8R2T9</accession>
<accession>Q8R351</accession>
<gene>
    <name type="primary">Rfwd3</name>
    <name type="synonym">Rnf201</name>
</gene>
<protein>
    <recommendedName>
        <fullName>E3 ubiquitin-protein ligase RFWD3</fullName>
        <ecNumber evidence="1">2.3.2.27</ecNumber>
    </recommendedName>
    <alternativeName>
        <fullName>RING finger and WD repeat domain-containing protein 3</fullName>
    </alternativeName>
    <alternativeName>
        <fullName>RING finger protein 201</fullName>
    </alternativeName>
</protein>
<dbReference type="EC" id="2.3.2.27" evidence="1"/>
<dbReference type="EMBL" id="AK137499">
    <property type="protein sequence ID" value="BAE23381.1"/>
    <property type="molecule type" value="mRNA"/>
</dbReference>
<dbReference type="EMBL" id="AK137698">
    <property type="protein sequence ID" value="BAE23467.1"/>
    <property type="molecule type" value="mRNA"/>
</dbReference>
<dbReference type="EMBL" id="BC018533">
    <property type="protein sequence ID" value="AAH18533.2"/>
    <property type="molecule type" value="mRNA"/>
</dbReference>
<dbReference type="EMBL" id="BC023694">
    <property type="protein sequence ID" value="AAH23694.1"/>
    <property type="molecule type" value="mRNA"/>
</dbReference>
<dbReference type="EMBL" id="BC026603">
    <property type="protein sequence ID" value="AAH26603.1"/>
    <property type="molecule type" value="mRNA"/>
</dbReference>
<dbReference type="EMBL" id="BC027246">
    <property type="protein sequence ID" value="AAH27246.1"/>
    <property type="status" value="ALT_INIT"/>
    <property type="molecule type" value="mRNA"/>
</dbReference>
<dbReference type="EMBL" id="BC096602">
    <property type="protein sequence ID" value="AAH96602.1"/>
    <property type="molecule type" value="mRNA"/>
</dbReference>
<dbReference type="CCDS" id="CCDS22672.1"/>
<dbReference type="RefSeq" id="NP_666330.2">
    <property type="nucleotide sequence ID" value="NM_146218.4"/>
</dbReference>
<dbReference type="SMR" id="Q8CIK8"/>
<dbReference type="BioGRID" id="231573">
    <property type="interactions" value="5"/>
</dbReference>
<dbReference type="FunCoup" id="Q8CIK8">
    <property type="interactions" value="3600"/>
</dbReference>
<dbReference type="STRING" id="10090.ENSMUSP00000043780"/>
<dbReference type="GlyGen" id="Q8CIK8">
    <property type="glycosylation" value="1 site, 1 O-linked glycan (1 site)"/>
</dbReference>
<dbReference type="iPTMnet" id="Q8CIK8"/>
<dbReference type="PhosphoSitePlus" id="Q8CIK8"/>
<dbReference type="SwissPalm" id="Q8CIK8"/>
<dbReference type="PaxDb" id="10090-ENSMUSP00000043780"/>
<dbReference type="PeptideAtlas" id="Q8CIK8"/>
<dbReference type="ProteomicsDB" id="255187"/>
<dbReference type="Antibodypedia" id="30261">
    <property type="antibodies" value="118 antibodies from 25 providers"/>
</dbReference>
<dbReference type="DNASU" id="234736"/>
<dbReference type="Ensembl" id="ENSMUST00000038739.5">
    <property type="protein sequence ID" value="ENSMUSP00000043780.5"/>
    <property type="gene ID" value="ENSMUSG00000033596.6"/>
</dbReference>
<dbReference type="GeneID" id="234736"/>
<dbReference type="KEGG" id="mmu:234736"/>
<dbReference type="UCSC" id="uc009nmb.1">
    <property type="organism name" value="mouse"/>
</dbReference>
<dbReference type="AGR" id="MGI:2384584"/>
<dbReference type="CTD" id="55159"/>
<dbReference type="MGI" id="MGI:2384584">
    <property type="gene designation" value="Rfwd3"/>
</dbReference>
<dbReference type="VEuPathDB" id="HostDB:ENSMUSG00000033596"/>
<dbReference type="eggNOG" id="KOG1645">
    <property type="taxonomic scope" value="Eukaryota"/>
</dbReference>
<dbReference type="GeneTree" id="ENSGT00390000008931"/>
<dbReference type="HOGENOM" id="CLU_021009_1_0_1"/>
<dbReference type="InParanoid" id="Q8CIK8"/>
<dbReference type="OMA" id="CLESWEM"/>
<dbReference type="OrthoDB" id="5600418at2759"/>
<dbReference type="PhylomeDB" id="Q8CIK8"/>
<dbReference type="TreeFam" id="TF323359"/>
<dbReference type="UniPathway" id="UPA00143"/>
<dbReference type="BioGRID-ORCS" id="234736">
    <property type="hits" value="9 hits in 114 CRISPR screens"/>
</dbReference>
<dbReference type="ChiTaRS" id="Rfwd3">
    <property type="organism name" value="mouse"/>
</dbReference>
<dbReference type="PRO" id="PR:Q8CIK8"/>
<dbReference type="Proteomes" id="UP000000589">
    <property type="component" value="Chromosome 8"/>
</dbReference>
<dbReference type="RNAct" id="Q8CIK8">
    <property type="molecule type" value="protein"/>
</dbReference>
<dbReference type="Bgee" id="ENSMUSG00000033596">
    <property type="expression patterns" value="Expressed in dorsal pancreas and 257 other cell types or tissues"/>
</dbReference>
<dbReference type="GO" id="GO:0005737">
    <property type="term" value="C:cytoplasm"/>
    <property type="evidence" value="ECO:0007669"/>
    <property type="project" value="UniProtKB-SubCell"/>
</dbReference>
<dbReference type="GO" id="GO:0005634">
    <property type="term" value="C:nucleus"/>
    <property type="evidence" value="ECO:0000250"/>
    <property type="project" value="UniProtKB"/>
</dbReference>
<dbReference type="GO" id="GO:0016605">
    <property type="term" value="C:PML body"/>
    <property type="evidence" value="ECO:0007669"/>
    <property type="project" value="UniProtKB-SubCell"/>
</dbReference>
<dbReference type="GO" id="GO:0090734">
    <property type="term" value="C:site of DNA damage"/>
    <property type="evidence" value="ECO:0000250"/>
    <property type="project" value="UniProtKB"/>
</dbReference>
<dbReference type="GO" id="GO:0035861">
    <property type="term" value="C:site of double-strand break"/>
    <property type="evidence" value="ECO:0007669"/>
    <property type="project" value="Ensembl"/>
</dbReference>
<dbReference type="GO" id="GO:0097371">
    <property type="term" value="F:MDM2/MDM4 family protein binding"/>
    <property type="evidence" value="ECO:0000250"/>
    <property type="project" value="UniProtKB"/>
</dbReference>
<dbReference type="GO" id="GO:0002039">
    <property type="term" value="F:p53 binding"/>
    <property type="evidence" value="ECO:0000250"/>
    <property type="project" value="UniProtKB"/>
</dbReference>
<dbReference type="GO" id="GO:0061630">
    <property type="term" value="F:ubiquitin protein ligase activity"/>
    <property type="evidence" value="ECO:0000250"/>
    <property type="project" value="UniProtKB"/>
</dbReference>
<dbReference type="GO" id="GO:0008270">
    <property type="term" value="F:zinc ion binding"/>
    <property type="evidence" value="ECO:0007669"/>
    <property type="project" value="UniProtKB-KW"/>
</dbReference>
<dbReference type="GO" id="GO:0006974">
    <property type="term" value="P:DNA damage response"/>
    <property type="evidence" value="ECO:0000250"/>
    <property type="project" value="UniProtKB"/>
</dbReference>
<dbReference type="GO" id="GO:0000724">
    <property type="term" value="P:double-strand break repair via homologous recombination"/>
    <property type="evidence" value="ECO:0000250"/>
    <property type="project" value="UniProtKB"/>
</dbReference>
<dbReference type="GO" id="GO:0036297">
    <property type="term" value="P:interstrand cross-link repair"/>
    <property type="evidence" value="ECO:0000250"/>
    <property type="project" value="UniProtKB"/>
</dbReference>
<dbReference type="GO" id="GO:0031571">
    <property type="term" value="P:mitotic G1 DNA damage checkpoint signaling"/>
    <property type="evidence" value="ECO:0000250"/>
    <property type="project" value="UniProtKB"/>
</dbReference>
<dbReference type="GO" id="GO:0016567">
    <property type="term" value="P:protein ubiquitination"/>
    <property type="evidence" value="ECO:0000250"/>
    <property type="project" value="UniProtKB"/>
</dbReference>
<dbReference type="GO" id="GO:2000001">
    <property type="term" value="P:regulation of DNA damage checkpoint"/>
    <property type="evidence" value="ECO:0007669"/>
    <property type="project" value="Ensembl"/>
</dbReference>
<dbReference type="GO" id="GO:0031297">
    <property type="term" value="P:replication fork processing"/>
    <property type="evidence" value="ECO:0000250"/>
    <property type="project" value="UniProtKB"/>
</dbReference>
<dbReference type="GO" id="GO:0010212">
    <property type="term" value="P:response to ionizing radiation"/>
    <property type="evidence" value="ECO:0000250"/>
    <property type="project" value="UniProtKB"/>
</dbReference>
<dbReference type="CDD" id="cd16450">
    <property type="entry name" value="mRING-C3HGC3_RFWD3"/>
    <property type="match status" value="1"/>
</dbReference>
<dbReference type="Gene3D" id="2.130.10.10">
    <property type="entry name" value="YVTN repeat-like/Quinoprotein amine dehydrogenase"/>
    <property type="match status" value="1"/>
</dbReference>
<dbReference type="Gene3D" id="3.30.40.10">
    <property type="entry name" value="Zinc/RING finger domain, C3HC4 (zinc finger)"/>
    <property type="match status" value="1"/>
</dbReference>
<dbReference type="InterPro" id="IPR037381">
    <property type="entry name" value="RFWD3"/>
</dbReference>
<dbReference type="InterPro" id="IPR015943">
    <property type="entry name" value="WD40/YVTN_repeat-like_dom_sf"/>
</dbReference>
<dbReference type="InterPro" id="IPR036322">
    <property type="entry name" value="WD40_repeat_dom_sf"/>
</dbReference>
<dbReference type="InterPro" id="IPR056527">
    <property type="entry name" value="WD40_RFWD3"/>
</dbReference>
<dbReference type="InterPro" id="IPR001680">
    <property type="entry name" value="WD40_rpt"/>
</dbReference>
<dbReference type="InterPro" id="IPR001841">
    <property type="entry name" value="Znf_RING"/>
</dbReference>
<dbReference type="InterPro" id="IPR013083">
    <property type="entry name" value="Znf_RING/FYVE/PHD"/>
</dbReference>
<dbReference type="PANTHER" id="PTHR16047:SF7">
    <property type="entry name" value="E3 UBIQUITIN-PROTEIN LIGASE RFWD3"/>
    <property type="match status" value="1"/>
</dbReference>
<dbReference type="PANTHER" id="PTHR16047">
    <property type="entry name" value="RFWD3 PROTEIN"/>
    <property type="match status" value="1"/>
</dbReference>
<dbReference type="Pfam" id="PF23419">
    <property type="entry name" value="WD40_RFWD3"/>
    <property type="match status" value="1"/>
</dbReference>
<dbReference type="Pfam" id="PF13639">
    <property type="entry name" value="zf-RING_2"/>
    <property type="match status" value="1"/>
</dbReference>
<dbReference type="SMART" id="SM00184">
    <property type="entry name" value="RING"/>
    <property type="match status" value="1"/>
</dbReference>
<dbReference type="SMART" id="SM00320">
    <property type="entry name" value="WD40"/>
    <property type="match status" value="2"/>
</dbReference>
<dbReference type="SUPFAM" id="SSF57850">
    <property type="entry name" value="RING/U-box"/>
    <property type="match status" value="1"/>
</dbReference>
<dbReference type="SUPFAM" id="SSF50978">
    <property type="entry name" value="WD40 repeat-like"/>
    <property type="match status" value="1"/>
</dbReference>
<dbReference type="PROSITE" id="PS50089">
    <property type="entry name" value="ZF_RING_2"/>
    <property type="match status" value="1"/>
</dbReference>
<sequence>MAEVAVGQASDLVPSEMDHEVIYSHLQGPLEGTIEPATPTEVVSNGAPLQPAPAELANSQGGAHVQPAPAEVVSSQDGLPTLQPLPPASIDLTEEVQPSEENMEVVNPGTSEEPSQGSGANPTAGAARSVSMNNFISGLQRLHNMLELLRPPPADHSVGPIRTRRRMAPILRARAGESQRQDNGRYVPHTPLYAYFQVSRSQPYPLPAAHDSETRNPPSGTDSDSDGSAEDEEVVVQAEEPEANIPEQGVIATDQEATSVTGDDAVPKESPQKPNMLSAMEDEEGETCTICLEQWTNAGDHRISALRCGHLFGFRCISKWLKGQTRKCPQCNKKAKHSDIVVIYARSLRALDTSEQERMKSDLLNEQMLRKQAELESAQCRLQLQVLIDKCTKLNSRVQDLEKFVVRHQNSAAQQCSRSKALCGKCLSSSQSPGKYSSEKTFTISQTGKCRILAYCDGLSCLVASQPSPQASFLPGFGVKMLSTANMKSSQYIPMHNKQIRGLSFSSQSKGLLLSASLDCTIKLTSLETNTVVQTYNTGRPVWSCCWCLDENNYVYAGLASGSILIYDLRNTNTYIQELVPQKARCPLVSLSYLPKAAVAAFPYGGVLAGTLENASFWELKSDFSHKPHVLSLEPGGFVDFQTESSTRHCLVTYRPDKSHNTVRTVLLEMSYKLDDAGEPVCSCLPVQTFLGGPTCKLLTKSAIFQSPENNGNVLVCTGDEASQSTLLWNAGSGLLLQNLKAGEPVLDICPFETNQNSYLATLTEKTVHMYKWE</sequence>
<name>RFWD3_MOUSE</name>
<organism>
    <name type="scientific">Mus musculus</name>
    <name type="common">Mouse</name>
    <dbReference type="NCBI Taxonomy" id="10090"/>
    <lineage>
        <taxon>Eukaryota</taxon>
        <taxon>Metazoa</taxon>
        <taxon>Chordata</taxon>
        <taxon>Craniata</taxon>
        <taxon>Vertebrata</taxon>
        <taxon>Euteleostomi</taxon>
        <taxon>Mammalia</taxon>
        <taxon>Eutheria</taxon>
        <taxon>Euarchontoglires</taxon>
        <taxon>Glires</taxon>
        <taxon>Rodentia</taxon>
        <taxon>Myomorpha</taxon>
        <taxon>Muroidea</taxon>
        <taxon>Muridae</taxon>
        <taxon>Murinae</taxon>
        <taxon>Mus</taxon>
        <taxon>Mus</taxon>
    </lineage>
</organism>
<evidence type="ECO:0000250" key="1">
    <source>
        <dbReference type="UniProtKB" id="Q6PCD5"/>
    </source>
</evidence>
<evidence type="ECO:0000255" key="2"/>
<evidence type="ECO:0000255" key="3">
    <source>
        <dbReference type="PROSITE-ProRule" id="PRU00175"/>
    </source>
</evidence>
<evidence type="ECO:0000256" key="4">
    <source>
        <dbReference type="SAM" id="MobiDB-lite"/>
    </source>
</evidence>
<evidence type="ECO:0000269" key="5">
    <source>
    </source>
</evidence>
<evidence type="ECO:0000305" key="6"/>
<reference key="1">
    <citation type="journal article" date="2005" name="Science">
        <title>The transcriptional landscape of the mammalian genome.</title>
        <authorList>
            <person name="Carninci P."/>
            <person name="Kasukawa T."/>
            <person name="Katayama S."/>
            <person name="Gough J."/>
            <person name="Frith M.C."/>
            <person name="Maeda N."/>
            <person name="Oyama R."/>
            <person name="Ravasi T."/>
            <person name="Lenhard B."/>
            <person name="Wells C."/>
            <person name="Kodzius R."/>
            <person name="Shimokawa K."/>
            <person name="Bajic V.B."/>
            <person name="Brenner S.E."/>
            <person name="Batalov S."/>
            <person name="Forrest A.R."/>
            <person name="Zavolan M."/>
            <person name="Davis M.J."/>
            <person name="Wilming L.G."/>
            <person name="Aidinis V."/>
            <person name="Allen J.E."/>
            <person name="Ambesi-Impiombato A."/>
            <person name="Apweiler R."/>
            <person name="Aturaliya R.N."/>
            <person name="Bailey T.L."/>
            <person name="Bansal M."/>
            <person name="Baxter L."/>
            <person name="Beisel K.W."/>
            <person name="Bersano T."/>
            <person name="Bono H."/>
            <person name="Chalk A.M."/>
            <person name="Chiu K.P."/>
            <person name="Choudhary V."/>
            <person name="Christoffels A."/>
            <person name="Clutterbuck D.R."/>
            <person name="Crowe M.L."/>
            <person name="Dalla E."/>
            <person name="Dalrymple B.P."/>
            <person name="de Bono B."/>
            <person name="Della Gatta G."/>
            <person name="di Bernardo D."/>
            <person name="Down T."/>
            <person name="Engstrom P."/>
            <person name="Fagiolini M."/>
            <person name="Faulkner G."/>
            <person name="Fletcher C.F."/>
            <person name="Fukushima T."/>
            <person name="Furuno M."/>
            <person name="Futaki S."/>
            <person name="Gariboldi M."/>
            <person name="Georgii-Hemming P."/>
            <person name="Gingeras T.R."/>
            <person name="Gojobori T."/>
            <person name="Green R.E."/>
            <person name="Gustincich S."/>
            <person name="Harbers M."/>
            <person name="Hayashi Y."/>
            <person name="Hensch T.K."/>
            <person name="Hirokawa N."/>
            <person name="Hill D."/>
            <person name="Huminiecki L."/>
            <person name="Iacono M."/>
            <person name="Ikeo K."/>
            <person name="Iwama A."/>
            <person name="Ishikawa T."/>
            <person name="Jakt M."/>
            <person name="Kanapin A."/>
            <person name="Katoh M."/>
            <person name="Kawasawa Y."/>
            <person name="Kelso J."/>
            <person name="Kitamura H."/>
            <person name="Kitano H."/>
            <person name="Kollias G."/>
            <person name="Krishnan S.P."/>
            <person name="Kruger A."/>
            <person name="Kummerfeld S.K."/>
            <person name="Kurochkin I.V."/>
            <person name="Lareau L.F."/>
            <person name="Lazarevic D."/>
            <person name="Lipovich L."/>
            <person name="Liu J."/>
            <person name="Liuni S."/>
            <person name="McWilliam S."/>
            <person name="Madan Babu M."/>
            <person name="Madera M."/>
            <person name="Marchionni L."/>
            <person name="Matsuda H."/>
            <person name="Matsuzawa S."/>
            <person name="Miki H."/>
            <person name="Mignone F."/>
            <person name="Miyake S."/>
            <person name="Morris K."/>
            <person name="Mottagui-Tabar S."/>
            <person name="Mulder N."/>
            <person name="Nakano N."/>
            <person name="Nakauchi H."/>
            <person name="Ng P."/>
            <person name="Nilsson R."/>
            <person name="Nishiguchi S."/>
            <person name="Nishikawa S."/>
            <person name="Nori F."/>
            <person name="Ohara O."/>
            <person name="Okazaki Y."/>
            <person name="Orlando V."/>
            <person name="Pang K.C."/>
            <person name="Pavan W.J."/>
            <person name="Pavesi G."/>
            <person name="Pesole G."/>
            <person name="Petrovsky N."/>
            <person name="Piazza S."/>
            <person name="Reed J."/>
            <person name="Reid J.F."/>
            <person name="Ring B.Z."/>
            <person name="Ringwald M."/>
            <person name="Rost B."/>
            <person name="Ruan Y."/>
            <person name="Salzberg S.L."/>
            <person name="Sandelin A."/>
            <person name="Schneider C."/>
            <person name="Schoenbach C."/>
            <person name="Sekiguchi K."/>
            <person name="Semple C.A."/>
            <person name="Seno S."/>
            <person name="Sessa L."/>
            <person name="Sheng Y."/>
            <person name="Shibata Y."/>
            <person name="Shimada H."/>
            <person name="Shimada K."/>
            <person name="Silva D."/>
            <person name="Sinclair B."/>
            <person name="Sperling S."/>
            <person name="Stupka E."/>
            <person name="Sugiura K."/>
            <person name="Sultana R."/>
            <person name="Takenaka Y."/>
            <person name="Taki K."/>
            <person name="Tammoja K."/>
            <person name="Tan S.L."/>
            <person name="Tang S."/>
            <person name="Taylor M.S."/>
            <person name="Tegner J."/>
            <person name="Teichmann S.A."/>
            <person name="Ueda H.R."/>
            <person name="van Nimwegen E."/>
            <person name="Verardo R."/>
            <person name="Wei C.L."/>
            <person name="Yagi K."/>
            <person name="Yamanishi H."/>
            <person name="Zabarovsky E."/>
            <person name="Zhu S."/>
            <person name="Zimmer A."/>
            <person name="Hide W."/>
            <person name="Bult C."/>
            <person name="Grimmond S.M."/>
            <person name="Teasdale R.D."/>
            <person name="Liu E.T."/>
            <person name="Brusic V."/>
            <person name="Quackenbush J."/>
            <person name="Wahlestedt C."/>
            <person name="Mattick J.S."/>
            <person name="Hume D.A."/>
            <person name="Kai C."/>
            <person name="Sasaki D."/>
            <person name="Tomaru Y."/>
            <person name="Fukuda S."/>
            <person name="Kanamori-Katayama M."/>
            <person name="Suzuki M."/>
            <person name="Aoki J."/>
            <person name="Arakawa T."/>
            <person name="Iida J."/>
            <person name="Imamura K."/>
            <person name="Itoh M."/>
            <person name="Kato T."/>
            <person name="Kawaji H."/>
            <person name="Kawagashira N."/>
            <person name="Kawashima T."/>
            <person name="Kojima M."/>
            <person name="Kondo S."/>
            <person name="Konno H."/>
            <person name="Nakano K."/>
            <person name="Ninomiya N."/>
            <person name="Nishio T."/>
            <person name="Okada M."/>
            <person name="Plessy C."/>
            <person name="Shibata K."/>
            <person name="Shiraki T."/>
            <person name="Suzuki S."/>
            <person name="Tagami M."/>
            <person name="Waki K."/>
            <person name="Watahiki A."/>
            <person name="Okamura-Oho Y."/>
            <person name="Suzuki H."/>
            <person name="Kawai J."/>
            <person name="Hayashizaki Y."/>
        </authorList>
    </citation>
    <scope>NUCLEOTIDE SEQUENCE [LARGE SCALE MRNA]</scope>
    <source>
        <strain>C57BL/6J</strain>
        <tissue>Bone</tissue>
        <tissue>Vagina</tissue>
    </source>
</reference>
<reference key="2">
    <citation type="journal article" date="2004" name="Genome Res.">
        <title>The status, quality, and expansion of the NIH full-length cDNA project: the Mammalian Gene Collection (MGC).</title>
        <authorList>
            <consortium name="The MGC Project Team"/>
        </authorList>
    </citation>
    <scope>NUCLEOTIDE SEQUENCE [LARGE SCALE MRNA]</scope>
    <source>
        <strain>Czech II</strain>
        <strain>FVB/N</strain>
        <tissue>Mammary tumor</tissue>
    </source>
</reference>
<reference key="3">
    <citation type="journal article" date="2017" name="J. Clin. Invest.">
        <title>Biallelic mutations in the ubiquitin ligase RFWD3 cause Fanconi anemia.</title>
        <authorList>
            <person name="Knies K."/>
            <person name="Inano S."/>
            <person name="Ramirez M.J."/>
            <person name="Ishiai M."/>
            <person name="Surralles J."/>
            <person name="Takata M."/>
            <person name="Schindler D."/>
        </authorList>
    </citation>
    <scope>DISRUPTION PHENOTYPE</scope>
</reference>
<comment type="function">
    <text evidence="1">E3 ubiquitin-protein ligase required for the repair of DNA interstrand cross-links (ICL) in response to DNA damage. Plays a key role in RPA-mediated DNA damage signaling and repair. Acts by mediating ubiquitination of the RPA complex (RPA1, RPA2 and RPA3 subunits) and RAD51 at stalled replication forks, leading to remove them from DNA damage sites and promote homologous recombination. Also mediates the ubiquitination of p53/TP53 in the late response to DNA damage, and acts as a positive regulator of p53/TP53 stability, thereby regulating the G1/S DNA damage checkpoint. May act by catalyzing the formation of short polyubiquitin chains on p53/TP53 that are not targeted to the proteasome. In response to ionizing radiation, interacts with MDM2 and enhances p53/TP53 ubiquitination, possibly by restricting MDM2 from extending polyubiquitin chains on ubiquitinated p53/TP53. Required to translesion DNA synthesis across DNA-protein cross-link adducts by catalyzing ubiquitination of proteins on single-stranded DNA (ssDNA).</text>
</comment>
<comment type="catalytic activity">
    <reaction evidence="1">
        <text>S-ubiquitinyl-[E2 ubiquitin-conjugating enzyme]-L-cysteine + [acceptor protein]-L-lysine = [E2 ubiquitin-conjugating enzyme]-L-cysteine + N(6)-ubiquitinyl-[acceptor protein]-L-lysine.</text>
        <dbReference type="EC" id="2.3.2.27"/>
    </reaction>
</comment>
<comment type="pathway">
    <text evidence="1">Protein modification; protein ubiquitination.</text>
</comment>
<comment type="subunit">
    <text evidence="1">Interacts with MDM2 and p53/TP53. Binds to the RPA complex via direct interaction with RPA2. Interacts with RAD51.</text>
</comment>
<comment type="subcellular location">
    <subcellularLocation>
        <location evidence="1">Nucleus</location>
    </subcellularLocation>
    <subcellularLocation>
        <location evidence="1">Nucleus</location>
        <location evidence="1">PML body</location>
    </subcellularLocation>
    <subcellularLocation>
        <location evidence="1">Cytoplasm</location>
    </subcellularLocation>
    <text evidence="1">In undamaged cells, found both in the cytoplasm and in the nucleus, partially associated with PML nuclear bodies. In response to replication block, such as that caused by hydroxyurea treatment, or to DNA damage caused by ionizing radiations or doxorubicin, recruited to the nucleus, to stalled replication forks or to sites of DNA repair. This recruitment depends upon RPA2.</text>
</comment>
<comment type="domain">
    <text evidence="1">The coiled coil domain may be involved in RPA2-binding.</text>
</comment>
<comment type="PTM">
    <text evidence="1">Phosphorylated at Ser-59 and Ser-75 upon DNA damage by ATM or ATR. ATM phosphorylation occurs at early times upon DNA damage, while ATR is the major kinase at later times. Phosphorylation by ATM and ATR is required to stabilize p53/TP53. Part of the phosphorylation depends upon RPA2 presence.</text>
</comment>
<comment type="disruption phenotype">
    <text evidence="5">Mice are viable and do not show overt phenotypic abnormalities, although there is some evidence for increased embryonic lethality, earlier death, and subfertility, associated with testicular and ovarian atrophy in mutant. Mutant mice embryonic fibroblasts are hypersensitive to DNA cross-linking agents and show increased chromosomal breakage compared to controls.</text>
</comment>
<comment type="sequence caution" evidence="6">
    <conflict type="erroneous initiation">
        <sequence resource="EMBL-CDS" id="AAH27246"/>
    </conflict>
    <text>Truncated N-terminus.</text>
</comment>
<keyword id="KW-0175">Coiled coil</keyword>
<keyword id="KW-0963">Cytoplasm</keyword>
<keyword id="KW-0227">DNA damage</keyword>
<keyword id="KW-0234">DNA repair</keyword>
<keyword id="KW-0479">Metal-binding</keyword>
<keyword id="KW-0539">Nucleus</keyword>
<keyword id="KW-0597">Phosphoprotein</keyword>
<keyword id="KW-1185">Reference proteome</keyword>
<keyword id="KW-0677">Repeat</keyword>
<keyword id="KW-0808">Transferase</keyword>
<keyword id="KW-0833">Ubl conjugation pathway</keyword>
<keyword id="KW-0853">WD repeat</keyword>
<keyword id="KW-0862">Zinc</keyword>
<keyword id="KW-0863">Zinc-finger</keyword>
<feature type="chain" id="PRO_0000278235" description="E3 ubiquitin-protein ligase RFWD3">
    <location>
        <begin position="1"/>
        <end position="774"/>
    </location>
</feature>
<feature type="repeat" description="WD 1">
    <location>
        <begin position="493"/>
        <end position="535"/>
    </location>
</feature>
<feature type="repeat" description="WD 2">
    <location>
        <begin position="536"/>
        <end position="568"/>
    </location>
</feature>
<feature type="repeat" description="WD 3">
    <location>
        <begin position="583"/>
        <end position="628"/>
    </location>
</feature>
<feature type="zinc finger region" description="RING-type; degenerate" evidence="3">
    <location>
        <begin position="288"/>
        <end position="332"/>
    </location>
</feature>
<feature type="region of interest" description="Disordered" evidence="4">
    <location>
        <begin position="32"/>
        <end position="126"/>
    </location>
</feature>
<feature type="region of interest" description="Disordered" evidence="4">
    <location>
        <begin position="203"/>
        <end position="281"/>
    </location>
</feature>
<feature type="coiled-coil region" evidence="2">
    <location>
        <begin position="358"/>
        <end position="403"/>
    </location>
</feature>
<feature type="compositionally biased region" description="Acidic residues" evidence="4">
    <location>
        <begin position="92"/>
        <end position="103"/>
    </location>
</feature>
<feature type="compositionally biased region" description="Polar residues" evidence="4">
    <location>
        <begin position="108"/>
        <end position="121"/>
    </location>
</feature>
<feature type="compositionally biased region" description="Acidic residues" evidence="4">
    <location>
        <begin position="223"/>
        <end position="242"/>
    </location>
</feature>
<feature type="modified residue" description="Phosphoserine; by ATM and ATR" evidence="1">
    <location>
        <position position="59"/>
    </location>
</feature>
<feature type="modified residue" description="Phosphoserine; by ATM and ATR" evidence="1">
    <location>
        <position position="75"/>
    </location>
</feature>
<feature type="sequence conflict" description="In Ref. 2; AAH18533." evidence="6" ref="2">
    <original>A</original>
    <variation>T</variation>
    <location>
        <position position="63"/>
    </location>
</feature>
<feature type="sequence conflict" description="In Ref. 2; AAH18533." evidence="6" ref="2">
    <original>N</original>
    <variation>S</variation>
    <location>
        <position position="275"/>
    </location>
</feature>
<feature type="sequence conflict" description="In Ref. 2; AAH18533." evidence="6" ref="2">
    <original>A</original>
    <variation>V</variation>
    <location>
        <position position="413"/>
    </location>
</feature>
<feature type="sequence conflict" description="In Ref. 1; BAE23381." evidence="6" ref="1">
    <original>L</original>
    <variation>M</variation>
    <location>
        <position position="459"/>
    </location>
</feature>
<feature type="sequence conflict" description="In Ref. 2; AAH18533." evidence="6" ref="2">
    <original>Q</original>
    <variation>H</variation>
    <location>
        <position position="724"/>
    </location>
</feature>
<feature type="sequence conflict" description="In Ref. 2; AAH18533." evidence="6" ref="2">
    <original>S</original>
    <variation>N</variation>
    <location>
        <position position="733"/>
    </location>
</feature>
<proteinExistence type="evidence at transcript level"/>